<reference key="1">
    <citation type="journal article" date="2007" name="Nat. Biotechnol.">
        <title>Genome sequencing and analysis of the versatile cell factory Aspergillus niger CBS 513.88.</title>
        <authorList>
            <person name="Pel H.J."/>
            <person name="de Winde J.H."/>
            <person name="Archer D.B."/>
            <person name="Dyer P.S."/>
            <person name="Hofmann G."/>
            <person name="Schaap P.J."/>
            <person name="Turner G."/>
            <person name="de Vries R.P."/>
            <person name="Albang R."/>
            <person name="Albermann K."/>
            <person name="Andersen M.R."/>
            <person name="Bendtsen J.D."/>
            <person name="Benen J.A.E."/>
            <person name="van den Berg M."/>
            <person name="Breestraat S."/>
            <person name="Caddick M.X."/>
            <person name="Contreras R."/>
            <person name="Cornell M."/>
            <person name="Coutinho P.M."/>
            <person name="Danchin E.G.J."/>
            <person name="Debets A.J.M."/>
            <person name="Dekker P."/>
            <person name="van Dijck P.W.M."/>
            <person name="van Dijk A."/>
            <person name="Dijkhuizen L."/>
            <person name="Driessen A.J.M."/>
            <person name="d'Enfert C."/>
            <person name="Geysens S."/>
            <person name="Goosen C."/>
            <person name="Groot G.S.P."/>
            <person name="de Groot P.W.J."/>
            <person name="Guillemette T."/>
            <person name="Henrissat B."/>
            <person name="Herweijer M."/>
            <person name="van den Hombergh J.P.T.W."/>
            <person name="van den Hondel C.A.M.J.J."/>
            <person name="van der Heijden R.T.J.M."/>
            <person name="van der Kaaij R.M."/>
            <person name="Klis F.M."/>
            <person name="Kools H.J."/>
            <person name="Kubicek C.P."/>
            <person name="van Kuyk P.A."/>
            <person name="Lauber J."/>
            <person name="Lu X."/>
            <person name="van der Maarel M.J.E.C."/>
            <person name="Meulenberg R."/>
            <person name="Menke H."/>
            <person name="Mortimer M.A."/>
            <person name="Nielsen J."/>
            <person name="Oliver S.G."/>
            <person name="Olsthoorn M."/>
            <person name="Pal K."/>
            <person name="van Peij N.N.M.E."/>
            <person name="Ram A.F.J."/>
            <person name="Rinas U."/>
            <person name="Roubos J.A."/>
            <person name="Sagt C.M.J."/>
            <person name="Schmoll M."/>
            <person name="Sun J."/>
            <person name="Ussery D."/>
            <person name="Varga J."/>
            <person name="Vervecken W."/>
            <person name="van de Vondervoort P.J.J."/>
            <person name="Wedler H."/>
            <person name="Woesten H.A.B."/>
            <person name="Zeng A.-P."/>
            <person name="van Ooyen A.J.J."/>
            <person name="Visser J."/>
            <person name="Stam H."/>
        </authorList>
    </citation>
    <scope>NUCLEOTIDE SEQUENCE [LARGE SCALE GENOMIC DNA]</scope>
    <source>
        <strain>ATCC MYA-4892 / CBS 513.88 / FGSC A1513</strain>
    </source>
</reference>
<accession>A2QWA6</accession>
<feature type="chain" id="PRO_0000317944" description="Autophagy-related protein 13">
    <location>
        <begin position="1"/>
        <end position="958"/>
    </location>
</feature>
<feature type="region of interest" description="Disordered" evidence="3">
    <location>
        <begin position="1"/>
        <end position="62"/>
    </location>
</feature>
<feature type="region of interest" description="Disordered" evidence="3">
    <location>
        <begin position="337"/>
        <end position="417"/>
    </location>
</feature>
<feature type="region of interest" description="Disordered" evidence="3">
    <location>
        <begin position="430"/>
        <end position="576"/>
    </location>
</feature>
<feature type="region of interest" description="Disordered" evidence="3">
    <location>
        <begin position="644"/>
        <end position="762"/>
    </location>
</feature>
<feature type="region of interest" description="Disordered" evidence="3">
    <location>
        <begin position="790"/>
        <end position="958"/>
    </location>
</feature>
<feature type="compositionally biased region" description="Polar residues" evidence="3">
    <location>
        <begin position="50"/>
        <end position="59"/>
    </location>
</feature>
<feature type="compositionally biased region" description="Basic and acidic residues" evidence="3">
    <location>
        <begin position="357"/>
        <end position="367"/>
    </location>
</feature>
<feature type="compositionally biased region" description="Low complexity" evidence="3">
    <location>
        <begin position="397"/>
        <end position="411"/>
    </location>
</feature>
<feature type="compositionally biased region" description="Low complexity" evidence="3">
    <location>
        <begin position="501"/>
        <end position="514"/>
    </location>
</feature>
<feature type="compositionally biased region" description="Polar residues" evidence="3">
    <location>
        <begin position="547"/>
        <end position="559"/>
    </location>
</feature>
<feature type="compositionally biased region" description="Low complexity" evidence="3">
    <location>
        <begin position="644"/>
        <end position="653"/>
    </location>
</feature>
<feature type="compositionally biased region" description="Pro residues" evidence="3">
    <location>
        <begin position="736"/>
        <end position="756"/>
    </location>
</feature>
<feature type="compositionally biased region" description="Polar residues" evidence="3">
    <location>
        <begin position="833"/>
        <end position="848"/>
    </location>
</feature>
<feature type="compositionally biased region" description="Low complexity" evidence="3">
    <location>
        <begin position="864"/>
        <end position="881"/>
    </location>
</feature>
<feature type="compositionally biased region" description="Basic and acidic residues" evidence="3">
    <location>
        <begin position="883"/>
        <end position="892"/>
    </location>
</feature>
<feature type="compositionally biased region" description="Polar residues" evidence="3">
    <location>
        <begin position="894"/>
        <end position="903"/>
    </location>
</feature>
<comment type="function">
    <text evidence="1">Activates the atg1 kinase in a nutritional condition dependent manner through the TOR pathway, leading to autophagy. Also involved in cytoplasm to vacuole transport (Cvt) and more specifically in Cvt vesicle formation. Seems to play a role in the switching machinery regulating the conversion between the Cvt pathway and autophagy. Finally, atg13 is also required for glycogen storage during stationary phase (By similarity).</text>
</comment>
<comment type="subunit">
    <text evidence="1">Interacts with atg1 to form the atg1-atg13 kinase complex.</text>
</comment>
<comment type="subcellular location">
    <subcellularLocation>
        <location evidence="2">Cytoplasm</location>
    </subcellularLocation>
    <subcellularLocation>
        <location evidence="2">Preautophagosomal structure</location>
    </subcellularLocation>
</comment>
<comment type="similarity">
    <text evidence="4">Belongs to the ATG13 family. Fungi subfamily.</text>
</comment>
<dbReference type="EMBL" id="AM270234">
    <property type="protein sequence ID" value="CAK45934.1"/>
    <property type="molecule type" value="Genomic_DNA"/>
</dbReference>
<dbReference type="RefSeq" id="XP_001394439.1">
    <property type="nucleotide sequence ID" value="XM_001394402.2"/>
</dbReference>
<dbReference type="SMR" id="A2QWA6"/>
<dbReference type="EnsemblFungi" id="CAK45934">
    <property type="protein sequence ID" value="CAK45934"/>
    <property type="gene ID" value="An11g04460"/>
</dbReference>
<dbReference type="GeneID" id="4984677"/>
<dbReference type="KEGG" id="ang:An11g04460"/>
<dbReference type="VEuPathDB" id="FungiDB:An11g04460"/>
<dbReference type="HOGENOM" id="CLU_007151_1_0_1"/>
<dbReference type="Proteomes" id="UP000006706">
    <property type="component" value="Chromosome 7R"/>
</dbReference>
<dbReference type="GO" id="GO:1990316">
    <property type="term" value="C:Atg1/ULK1 kinase complex"/>
    <property type="evidence" value="ECO:0007669"/>
    <property type="project" value="InterPro"/>
</dbReference>
<dbReference type="GO" id="GO:0005829">
    <property type="term" value="C:cytosol"/>
    <property type="evidence" value="ECO:0007669"/>
    <property type="project" value="TreeGrafter"/>
</dbReference>
<dbReference type="GO" id="GO:0000407">
    <property type="term" value="C:phagophore assembly site"/>
    <property type="evidence" value="ECO:0007669"/>
    <property type="project" value="UniProtKB-SubCell"/>
</dbReference>
<dbReference type="GO" id="GO:0000423">
    <property type="term" value="P:mitophagy"/>
    <property type="evidence" value="ECO:0007669"/>
    <property type="project" value="TreeGrafter"/>
</dbReference>
<dbReference type="GO" id="GO:0034727">
    <property type="term" value="P:piecemeal microautophagy of the nucleus"/>
    <property type="evidence" value="ECO:0007669"/>
    <property type="project" value="TreeGrafter"/>
</dbReference>
<dbReference type="GO" id="GO:0034497">
    <property type="term" value="P:protein localization to phagophore assembly site"/>
    <property type="evidence" value="ECO:0007669"/>
    <property type="project" value="TreeGrafter"/>
</dbReference>
<dbReference type="GO" id="GO:0015031">
    <property type="term" value="P:protein transport"/>
    <property type="evidence" value="ECO:0007669"/>
    <property type="project" value="UniProtKB-KW"/>
</dbReference>
<dbReference type="Gene3D" id="6.10.140.1900">
    <property type="match status" value="1"/>
</dbReference>
<dbReference type="Gene3D" id="3.30.900.10">
    <property type="entry name" value="HORMA domain"/>
    <property type="match status" value="1"/>
</dbReference>
<dbReference type="InterPro" id="IPR040182">
    <property type="entry name" value="ATG13"/>
</dbReference>
<dbReference type="InterPro" id="IPR018731">
    <property type="entry name" value="Atg13_N"/>
</dbReference>
<dbReference type="InterPro" id="IPR036570">
    <property type="entry name" value="HORMA_dom_sf"/>
</dbReference>
<dbReference type="PANTHER" id="PTHR13430">
    <property type="match status" value="1"/>
</dbReference>
<dbReference type="PANTHER" id="PTHR13430:SF4">
    <property type="entry name" value="AUTOPHAGY-RELATED PROTEIN 13"/>
    <property type="match status" value="1"/>
</dbReference>
<dbReference type="Pfam" id="PF10033">
    <property type="entry name" value="ATG13"/>
    <property type="match status" value="1"/>
</dbReference>
<gene>
    <name type="primary">atg13</name>
    <name type="ORF">An11g04460</name>
</gene>
<name>ATG13_ASPNC</name>
<evidence type="ECO:0000250" key="1"/>
<evidence type="ECO:0000250" key="2">
    <source>
        <dbReference type="UniProtKB" id="Q06628"/>
    </source>
</evidence>
<evidence type="ECO:0000256" key="3">
    <source>
        <dbReference type="SAM" id="MobiDB-lite"/>
    </source>
</evidence>
<evidence type="ECO:0000305" key="4"/>
<keyword id="KW-0072">Autophagy</keyword>
<keyword id="KW-0963">Cytoplasm</keyword>
<keyword id="KW-0653">Protein transport</keyword>
<keyword id="KW-1185">Reference proteome</keyword>
<keyword id="KW-0813">Transport</keyword>
<proteinExistence type="inferred from homology"/>
<sequence>MHQHPRSPAPAAPPSASRPGANRSDDRPNSPAFDPRVQLTRGLGIETEARSSGQTSSSRPAKEAISKLNQLVTNYHTKAALVILASRIDLTRSDDTPKINPKVNRWFAIDLEDIDALREQLRFWRINDVSEQPPPPLIIETYLDTKDLTNNQSLVALDEQGKRFDVLESLSRSSEAHAKGPVSSRSEDVILERWRVELGNTPNKALPADLGSILPKIYKQSIVTFRTLFTYSKLLPAWKLAKRNGRLHAHPALQIRYRILAGKPNPDDSRPDRLTTPLFDSSNKVVETYTFGTTESPVGYLSIQVTYRTSCEFRVDDSEALLSSRFMGADDEVFRPSLPSRESNLKAANSGVGSAPVEKRTVEDPDPSRAYGSLSTFHHVGPTTSASPISALRAARESGAASPSPPSSSSRKPVEVVKASPLGRAAVLANESSPGVARRSSISFPPFKAPPLSASPSLVDPPLGMSPRSGTMTRPQFPESKNMPPPSMAASARKSLPLPGASETTATSSNSASPRPTPIARYSSAFTHRRGRPSSGNINRIDDENSSGKTSATSSNPQPGSGLLAEATGTSADSIHADDENITEFLKMLDLRKDLLRTSNSASADVTARRTTATSAALTRFQRMRDSNAQLSESMSSSMLLQRSSTSSSKQLSGVPPMVAGTSISTASSPGKPISPHTPHTPAIPSRLSSNSIVDYGNERGREQPSSVGDYTPEGPTIPHRPSVVTVNAIDIPTSPGLPFPPYRRPSSAAPPPPPVATDDDEIFPFNLRSVSLGAEERSHNSLSALQRQHDLEGAKSNTQPTRREQRPPLASEDPSRRSSSTGHGTSPHKRTSLSGPTVAPSPSNNHVYQPRFSLCRGRGLSGGPHSLSSGSSSLARGAPSDLAERDHDRDVNASGSNSGTSTVEDRRAAGRRPSSGRNIPPPSQVEEDEPLLFAMSDFGASRRSFEEGRHGNHGRRL</sequence>
<protein>
    <recommendedName>
        <fullName>Autophagy-related protein 13</fullName>
    </recommendedName>
</protein>
<organism>
    <name type="scientific">Aspergillus niger (strain ATCC MYA-4892 / CBS 513.88 / FGSC A1513)</name>
    <dbReference type="NCBI Taxonomy" id="425011"/>
    <lineage>
        <taxon>Eukaryota</taxon>
        <taxon>Fungi</taxon>
        <taxon>Dikarya</taxon>
        <taxon>Ascomycota</taxon>
        <taxon>Pezizomycotina</taxon>
        <taxon>Eurotiomycetes</taxon>
        <taxon>Eurotiomycetidae</taxon>
        <taxon>Eurotiales</taxon>
        <taxon>Aspergillaceae</taxon>
        <taxon>Aspergillus</taxon>
        <taxon>Aspergillus subgen. Circumdati</taxon>
    </lineage>
</organism>